<feature type="chain" id="PRO_0000400433" description="L-cysteine:1D-myo-inositol 2-amino-2-deoxy-alpha-D-glucopyranoside ligase">
    <location>
        <begin position="1"/>
        <end position="427"/>
    </location>
</feature>
<feature type="short sequence motif" description="'HIGH' region" evidence="1">
    <location>
        <begin position="48"/>
        <end position="58"/>
    </location>
</feature>
<feature type="short sequence motif" description="'ERGGDP' region" evidence="1">
    <location>
        <begin position="186"/>
        <end position="191"/>
    </location>
</feature>
<feature type="short sequence motif" description="'KMSKS' region" evidence="1">
    <location>
        <begin position="295"/>
        <end position="299"/>
    </location>
</feature>
<feature type="binding site" evidence="1">
    <location>
        <begin position="46"/>
        <end position="49"/>
    </location>
    <ligand>
        <name>L-cysteinyl-5'-AMP</name>
        <dbReference type="ChEBI" id="CHEBI:144924"/>
    </ligand>
</feature>
<feature type="binding site" evidence="1">
    <location>
        <position position="46"/>
    </location>
    <ligand>
        <name>Zn(2+)</name>
        <dbReference type="ChEBI" id="CHEBI:29105"/>
    </ligand>
</feature>
<feature type="binding site" evidence="1">
    <location>
        <position position="61"/>
    </location>
    <ligand>
        <name>L-cysteinyl-5'-AMP</name>
        <dbReference type="ChEBI" id="CHEBI:144924"/>
    </ligand>
</feature>
<feature type="binding site" evidence="1">
    <location>
        <begin position="84"/>
        <end position="86"/>
    </location>
    <ligand>
        <name>L-cysteinyl-5'-AMP</name>
        <dbReference type="ChEBI" id="CHEBI:144924"/>
    </ligand>
</feature>
<feature type="binding site" evidence="1">
    <location>
        <position position="233"/>
    </location>
    <ligand>
        <name>L-cysteinyl-5'-AMP</name>
        <dbReference type="ChEBI" id="CHEBI:144924"/>
    </ligand>
</feature>
<feature type="binding site" evidence="1">
    <location>
        <position position="237"/>
    </location>
    <ligand>
        <name>Zn(2+)</name>
        <dbReference type="ChEBI" id="CHEBI:29105"/>
    </ligand>
</feature>
<feature type="binding site" evidence="1">
    <location>
        <begin position="255"/>
        <end position="257"/>
    </location>
    <ligand>
        <name>L-cysteinyl-5'-AMP</name>
        <dbReference type="ChEBI" id="CHEBI:144924"/>
    </ligand>
</feature>
<feature type="binding site" evidence="1">
    <location>
        <position position="262"/>
    </location>
    <ligand>
        <name>Zn(2+)</name>
        <dbReference type="ChEBI" id="CHEBI:29105"/>
    </ligand>
</feature>
<feature type="binding site" evidence="1">
    <location>
        <position position="289"/>
    </location>
    <ligand>
        <name>L-cysteinyl-5'-AMP</name>
        <dbReference type="ChEBI" id="CHEBI:144924"/>
    </ligand>
</feature>
<evidence type="ECO:0000255" key="1">
    <source>
        <dbReference type="HAMAP-Rule" id="MF_01697"/>
    </source>
</evidence>
<accession>C7Q9B2</accession>
<keyword id="KW-0067">ATP-binding</keyword>
<keyword id="KW-0436">Ligase</keyword>
<keyword id="KW-0479">Metal-binding</keyword>
<keyword id="KW-0547">Nucleotide-binding</keyword>
<keyword id="KW-1185">Reference proteome</keyword>
<keyword id="KW-0862">Zinc</keyword>
<reference key="1">
    <citation type="journal article" date="2009" name="Stand. Genomic Sci.">
        <title>Complete genome sequence of Catenulispora acidiphila type strain (ID 139908).</title>
        <authorList>
            <person name="Copeland A."/>
            <person name="Lapidus A."/>
            <person name="Glavina Del Rio T."/>
            <person name="Nolan M."/>
            <person name="Lucas S."/>
            <person name="Chen F."/>
            <person name="Tice H."/>
            <person name="Cheng J.F."/>
            <person name="Bruce D."/>
            <person name="Goodwin L."/>
            <person name="Pitluck S."/>
            <person name="Mikhailova N."/>
            <person name="Pati A."/>
            <person name="Ivanova N."/>
            <person name="Mavromatis K."/>
            <person name="Chen A."/>
            <person name="Palaniappan K."/>
            <person name="Chain P."/>
            <person name="Land M."/>
            <person name="Hauser L."/>
            <person name="Chang Y.J."/>
            <person name="Jeffries C.D."/>
            <person name="Chertkov O."/>
            <person name="Brettin T."/>
            <person name="Detter J.C."/>
            <person name="Han C."/>
            <person name="Ali Z."/>
            <person name="Tindall B.J."/>
            <person name="Goker M."/>
            <person name="Bristow J."/>
            <person name="Eisen J.A."/>
            <person name="Markowitz V."/>
            <person name="Hugenholtz P."/>
            <person name="Kyrpides N.C."/>
            <person name="Klenk H.P."/>
        </authorList>
    </citation>
    <scope>NUCLEOTIDE SEQUENCE [LARGE SCALE GENOMIC DNA]</scope>
    <source>
        <strain>DSM 44928 / JCM 14897 / NBRC 102108 / NRRL B-24433 / ID139908</strain>
    </source>
</reference>
<name>MSHC_CATAD</name>
<comment type="function">
    <text evidence="1">Catalyzes the ATP-dependent condensation of GlcN-Ins and L-cysteine to form L-Cys-GlcN-Ins.</text>
</comment>
<comment type="catalytic activity">
    <reaction evidence="1">
        <text>1D-myo-inositol 2-amino-2-deoxy-alpha-D-glucopyranoside + L-cysteine + ATP = 1D-myo-inositol 2-(L-cysteinylamino)-2-deoxy-alpha-D-glucopyranoside + AMP + diphosphate + H(+)</text>
        <dbReference type="Rhea" id="RHEA:26176"/>
        <dbReference type="ChEBI" id="CHEBI:15378"/>
        <dbReference type="ChEBI" id="CHEBI:30616"/>
        <dbReference type="ChEBI" id="CHEBI:33019"/>
        <dbReference type="ChEBI" id="CHEBI:35235"/>
        <dbReference type="ChEBI" id="CHEBI:58886"/>
        <dbReference type="ChEBI" id="CHEBI:58887"/>
        <dbReference type="ChEBI" id="CHEBI:456215"/>
        <dbReference type="EC" id="6.3.1.13"/>
    </reaction>
</comment>
<comment type="cofactor">
    <cofactor evidence="1">
        <name>Zn(2+)</name>
        <dbReference type="ChEBI" id="CHEBI:29105"/>
    </cofactor>
    <text evidence="1">Binds 1 zinc ion per subunit.</text>
</comment>
<comment type="subunit">
    <text evidence="1">Monomer.</text>
</comment>
<comment type="similarity">
    <text evidence="1">Belongs to the class-I aminoacyl-tRNA synthetase family. MshC subfamily.</text>
</comment>
<organism>
    <name type="scientific">Catenulispora acidiphila (strain DSM 44928 / JCM 14897 / NBRC 102108 / NRRL B-24433 / ID139908)</name>
    <dbReference type="NCBI Taxonomy" id="479433"/>
    <lineage>
        <taxon>Bacteria</taxon>
        <taxon>Bacillati</taxon>
        <taxon>Actinomycetota</taxon>
        <taxon>Actinomycetes</taxon>
        <taxon>Catenulisporales</taxon>
        <taxon>Catenulisporaceae</taxon>
        <taxon>Catenulispora</taxon>
    </lineage>
</organism>
<gene>
    <name evidence="1" type="primary">mshC</name>
    <name type="ordered locus">Caci_5399</name>
</gene>
<dbReference type="EC" id="6.3.1.13" evidence="1"/>
<dbReference type="EMBL" id="CP001700">
    <property type="protein sequence ID" value="ACU74258.1"/>
    <property type="molecule type" value="Genomic_DNA"/>
</dbReference>
<dbReference type="RefSeq" id="WP_015793987.1">
    <property type="nucleotide sequence ID" value="NC_013131.1"/>
</dbReference>
<dbReference type="SMR" id="C7Q9B2"/>
<dbReference type="STRING" id="479433.Caci_5399"/>
<dbReference type="KEGG" id="cai:Caci_5399"/>
<dbReference type="eggNOG" id="COG0215">
    <property type="taxonomic scope" value="Bacteria"/>
</dbReference>
<dbReference type="HOGENOM" id="CLU_013528_0_0_11"/>
<dbReference type="InParanoid" id="C7Q9B2"/>
<dbReference type="OrthoDB" id="9815130at2"/>
<dbReference type="Proteomes" id="UP000000851">
    <property type="component" value="Chromosome"/>
</dbReference>
<dbReference type="GO" id="GO:0005829">
    <property type="term" value="C:cytosol"/>
    <property type="evidence" value="ECO:0007669"/>
    <property type="project" value="TreeGrafter"/>
</dbReference>
<dbReference type="GO" id="GO:0005524">
    <property type="term" value="F:ATP binding"/>
    <property type="evidence" value="ECO:0007669"/>
    <property type="project" value="UniProtKB-KW"/>
</dbReference>
<dbReference type="GO" id="GO:0035446">
    <property type="term" value="F:cysteine-glucosaminylinositol ligase activity"/>
    <property type="evidence" value="ECO:0007669"/>
    <property type="project" value="UniProtKB-UniRule"/>
</dbReference>
<dbReference type="GO" id="GO:0004817">
    <property type="term" value="F:cysteine-tRNA ligase activity"/>
    <property type="evidence" value="ECO:0007669"/>
    <property type="project" value="TreeGrafter"/>
</dbReference>
<dbReference type="GO" id="GO:0008270">
    <property type="term" value="F:zinc ion binding"/>
    <property type="evidence" value="ECO:0007669"/>
    <property type="project" value="UniProtKB-UniRule"/>
</dbReference>
<dbReference type="GO" id="GO:0006423">
    <property type="term" value="P:cysteinyl-tRNA aminoacylation"/>
    <property type="evidence" value="ECO:0007669"/>
    <property type="project" value="TreeGrafter"/>
</dbReference>
<dbReference type="GO" id="GO:0010125">
    <property type="term" value="P:mycothiol biosynthetic process"/>
    <property type="evidence" value="ECO:0007669"/>
    <property type="project" value="UniProtKB-UniRule"/>
</dbReference>
<dbReference type="FunFam" id="3.40.50.620:FF:000134">
    <property type="entry name" value="L-cysteine:1D-myo-inositol 2-amino-2-deoxy-alpha-D-glucopyranoside ligase"/>
    <property type="match status" value="1"/>
</dbReference>
<dbReference type="Gene3D" id="1.20.120.640">
    <property type="entry name" value="Anticodon-binding domain of a subclass of class I aminoacyl-tRNA synthetases"/>
    <property type="match status" value="1"/>
</dbReference>
<dbReference type="Gene3D" id="3.40.50.620">
    <property type="entry name" value="HUPs"/>
    <property type="match status" value="1"/>
</dbReference>
<dbReference type="HAMAP" id="MF_01697">
    <property type="entry name" value="MshC"/>
    <property type="match status" value="1"/>
</dbReference>
<dbReference type="InterPro" id="IPR024909">
    <property type="entry name" value="Cys-tRNA/MSH_ligase"/>
</dbReference>
<dbReference type="InterPro" id="IPR017812">
    <property type="entry name" value="Mycothiol_ligase_MshC"/>
</dbReference>
<dbReference type="InterPro" id="IPR014729">
    <property type="entry name" value="Rossmann-like_a/b/a_fold"/>
</dbReference>
<dbReference type="InterPro" id="IPR032678">
    <property type="entry name" value="tRNA-synt_1_cat_dom"/>
</dbReference>
<dbReference type="NCBIfam" id="TIGR03447">
    <property type="entry name" value="mycothiol_MshC"/>
    <property type="match status" value="1"/>
</dbReference>
<dbReference type="PANTHER" id="PTHR10890:SF3">
    <property type="entry name" value="CYSTEINE--TRNA LIGASE, CYTOPLASMIC"/>
    <property type="match status" value="1"/>
</dbReference>
<dbReference type="PANTHER" id="PTHR10890">
    <property type="entry name" value="CYSTEINYL-TRNA SYNTHETASE"/>
    <property type="match status" value="1"/>
</dbReference>
<dbReference type="Pfam" id="PF01406">
    <property type="entry name" value="tRNA-synt_1e"/>
    <property type="match status" value="1"/>
</dbReference>
<dbReference type="PRINTS" id="PR00983">
    <property type="entry name" value="TRNASYNTHCYS"/>
</dbReference>
<dbReference type="SUPFAM" id="SSF52374">
    <property type="entry name" value="Nucleotidylyl transferase"/>
    <property type="match status" value="1"/>
</dbReference>
<protein>
    <recommendedName>
        <fullName evidence="1">L-cysteine:1D-myo-inositol 2-amino-2-deoxy-alpha-D-glucopyranoside ligase</fullName>
        <shortName evidence="1">L-Cys:GlcN-Ins ligase</shortName>
        <ecNumber evidence="1">6.3.1.13</ecNumber>
    </recommendedName>
    <alternativeName>
        <fullName evidence="1">Mycothiol ligase</fullName>
        <shortName evidence="1">MSH ligase</shortName>
    </alternativeName>
</protein>
<sequence>MHAWPAPEVPELPGHGSAVRLHDTAAQGLVPTPAAAPGEAARIYVCGITPYDATHMGHANTYLTFDLIQRAWLDAGHPVSYVQNVTDVDDPLLERAAATGRDWEALAESETALFREDMTALRILPPQHYVGAVESIPLVVDLVVKLLERGAAYDVDGDVYFSVHADPAFGAVAHLDAPEMLTTFGERGGDPGRPGKKDPLDCLLWQAEREGEPSWEPGEQARAAGLKPGRPGWHIECAAIALEHLGMGIDLQGGGSDLAFPHHEMGASEAQVVTGQRPYAHSYVHSGMVGLDGEKMSKSKGNLVLVSKLRHAGVDPMAIRLALLAHHYRTDWEWTDADLVSAVARLARWRAAVSRPDGVPADDVLDAVRARIADDLDAPGALAVIDAWVARQEAADGDDTAAASAQRNTAAPGQISRITDALLGVAL</sequence>
<proteinExistence type="inferred from homology"/>